<reference key="1">
    <citation type="journal article" date="2011" name="J. Bacteriol.">
        <title>Genome sequence of Thermotoga sp. strain RQ2, a hyperthermophilic bacterium isolated from a geothermally heated region of the seafloor near Ribeira Quente, the Azores.</title>
        <authorList>
            <person name="Swithers K.S."/>
            <person name="DiPippo J.L."/>
            <person name="Bruce D.C."/>
            <person name="Detter C."/>
            <person name="Tapia R."/>
            <person name="Han S."/>
            <person name="Saunders E."/>
            <person name="Goodwin L.A."/>
            <person name="Han J."/>
            <person name="Woyke T."/>
            <person name="Pitluck S."/>
            <person name="Pennacchio L."/>
            <person name="Nolan M."/>
            <person name="Mikhailova N."/>
            <person name="Lykidis A."/>
            <person name="Land M.L."/>
            <person name="Brettin T."/>
            <person name="Stetter K.O."/>
            <person name="Nelson K.E."/>
            <person name="Gogarten J.P."/>
            <person name="Noll K.M."/>
        </authorList>
    </citation>
    <scope>NUCLEOTIDE SEQUENCE [LARGE SCALE GENOMIC DNA]</scope>
    <source>
        <strain>RQ2</strain>
    </source>
</reference>
<dbReference type="EMBL" id="CP000969">
    <property type="protein sequence ID" value="ACB08771.1"/>
    <property type="molecule type" value="Genomic_DNA"/>
</dbReference>
<dbReference type="RefSeq" id="WP_012310532.1">
    <property type="nucleotide sequence ID" value="NC_010483.1"/>
</dbReference>
<dbReference type="SMR" id="B1L8X3"/>
<dbReference type="KEGG" id="trq:TRQ2_0415"/>
<dbReference type="HOGENOM" id="CLU_033123_0_0_0"/>
<dbReference type="Proteomes" id="UP000001687">
    <property type="component" value="Chromosome"/>
</dbReference>
<dbReference type="GO" id="GO:0009376">
    <property type="term" value="C:HslUV protease complex"/>
    <property type="evidence" value="ECO:0007669"/>
    <property type="project" value="UniProtKB-UniRule"/>
</dbReference>
<dbReference type="GO" id="GO:0005524">
    <property type="term" value="F:ATP binding"/>
    <property type="evidence" value="ECO:0007669"/>
    <property type="project" value="UniProtKB-UniRule"/>
</dbReference>
<dbReference type="GO" id="GO:0016887">
    <property type="term" value="F:ATP hydrolysis activity"/>
    <property type="evidence" value="ECO:0007669"/>
    <property type="project" value="InterPro"/>
</dbReference>
<dbReference type="GO" id="GO:0008233">
    <property type="term" value="F:peptidase activity"/>
    <property type="evidence" value="ECO:0007669"/>
    <property type="project" value="InterPro"/>
</dbReference>
<dbReference type="GO" id="GO:0036402">
    <property type="term" value="F:proteasome-activating activity"/>
    <property type="evidence" value="ECO:0007669"/>
    <property type="project" value="UniProtKB-UniRule"/>
</dbReference>
<dbReference type="GO" id="GO:0043335">
    <property type="term" value="P:protein unfolding"/>
    <property type="evidence" value="ECO:0007669"/>
    <property type="project" value="UniProtKB-UniRule"/>
</dbReference>
<dbReference type="GO" id="GO:0051603">
    <property type="term" value="P:proteolysis involved in protein catabolic process"/>
    <property type="evidence" value="ECO:0007669"/>
    <property type="project" value="TreeGrafter"/>
</dbReference>
<dbReference type="CDD" id="cd19498">
    <property type="entry name" value="RecA-like_HslU"/>
    <property type="match status" value="1"/>
</dbReference>
<dbReference type="FunFam" id="3.40.50.300:FF:000220">
    <property type="entry name" value="ATP-dependent protease ATPase subunit HslU"/>
    <property type="match status" value="1"/>
</dbReference>
<dbReference type="Gene3D" id="1.10.8.60">
    <property type="match status" value="1"/>
</dbReference>
<dbReference type="Gene3D" id="3.40.50.300">
    <property type="entry name" value="P-loop containing nucleotide triphosphate hydrolases"/>
    <property type="match status" value="2"/>
</dbReference>
<dbReference type="HAMAP" id="MF_00249">
    <property type="entry name" value="HslU"/>
    <property type="match status" value="1"/>
</dbReference>
<dbReference type="InterPro" id="IPR003593">
    <property type="entry name" value="AAA+_ATPase"/>
</dbReference>
<dbReference type="InterPro" id="IPR050052">
    <property type="entry name" value="ATP-dep_Clp_protease_ClpX"/>
</dbReference>
<dbReference type="InterPro" id="IPR003959">
    <property type="entry name" value="ATPase_AAA_core"/>
</dbReference>
<dbReference type="InterPro" id="IPR019489">
    <property type="entry name" value="Clp_ATPase_C"/>
</dbReference>
<dbReference type="InterPro" id="IPR004491">
    <property type="entry name" value="HslU"/>
</dbReference>
<dbReference type="InterPro" id="IPR027417">
    <property type="entry name" value="P-loop_NTPase"/>
</dbReference>
<dbReference type="NCBIfam" id="TIGR00390">
    <property type="entry name" value="hslU"/>
    <property type="match status" value="1"/>
</dbReference>
<dbReference type="NCBIfam" id="NF003544">
    <property type="entry name" value="PRK05201.1"/>
    <property type="match status" value="1"/>
</dbReference>
<dbReference type="PANTHER" id="PTHR48102">
    <property type="entry name" value="ATP-DEPENDENT CLP PROTEASE ATP-BINDING SUBUNIT CLPX-LIKE, MITOCHONDRIAL-RELATED"/>
    <property type="match status" value="1"/>
</dbReference>
<dbReference type="PANTHER" id="PTHR48102:SF3">
    <property type="entry name" value="ATP-DEPENDENT PROTEASE ATPASE SUBUNIT HSLU"/>
    <property type="match status" value="1"/>
</dbReference>
<dbReference type="Pfam" id="PF00004">
    <property type="entry name" value="AAA"/>
    <property type="match status" value="1"/>
</dbReference>
<dbReference type="Pfam" id="PF07724">
    <property type="entry name" value="AAA_2"/>
    <property type="match status" value="1"/>
</dbReference>
<dbReference type="SMART" id="SM00382">
    <property type="entry name" value="AAA"/>
    <property type="match status" value="1"/>
</dbReference>
<dbReference type="SMART" id="SM01086">
    <property type="entry name" value="ClpB_D2-small"/>
    <property type="match status" value="1"/>
</dbReference>
<dbReference type="SUPFAM" id="SSF52540">
    <property type="entry name" value="P-loop containing nucleoside triphosphate hydrolases"/>
    <property type="match status" value="1"/>
</dbReference>
<name>HSLU_THESQ</name>
<organism>
    <name type="scientific">Thermotoga sp. (strain RQ2)</name>
    <dbReference type="NCBI Taxonomy" id="126740"/>
    <lineage>
        <taxon>Bacteria</taxon>
        <taxon>Thermotogati</taxon>
        <taxon>Thermotogota</taxon>
        <taxon>Thermotogae</taxon>
        <taxon>Thermotogales</taxon>
        <taxon>Thermotogaceae</taxon>
        <taxon>Thermotoga</taxon>
    </lineage>
</organism>
<keyword id="KW-0067">ATP-binding</keyword>
<keyword id="KW-0143">Chaperone</keyword>
<keyword id="KW-0963">Cytoplasm</keyword>
<keyword id="KW-0547">Nucleotide-binding</keyword>
<keyword id="KW-0346">Stress response</keyword>
<proteinExistence type="inferred from homology"/>
<feature type="chain" id="PRO_1000100979" description="ATP-dependent protease ATPase subunit HslU">
    <location>
        <begin position="1"/>
        <end position="463"/>
    </location>
</feature>
<feature type="binding site" evidence="1">
    <location>
        <position position="21"/>
    </location>
    <ligand>
        <name>ATP</name>
        <dbReference type="ChEBI" id="CHEBI:30616"/>
    </ligand>
</feature>
<feature type="binding site" evidence="1">
    <location>
        <begin position="63"/>
        <end position="68"/>
    </location>
    <ligand>
        <name>ATP</name>
        <dbReference type="ChEBI" id="CHEBI:30616"/>
    </ligand>
</feature>
<feature type="binding site" evidence="1">
    <location>
        <position position="276"/>
    </location>
    <ligand>
        <name>ATP</name>
        <dbReference type="ChEBI" id="CHEBI:30616"/>
    </ligand>
</feature>
<feature type="binding site" evidence="1">
    <location>
        <position position="341"/>
    </location>
    <ligand>
        <name>ATP</name>
        <dbReference type="ChEBI" id="CHEBI:30616"/>
    </ligand>
</feature>
<feature type="binding site" evidence="1">
    <location>
        <position position="413"/>
    </location>
    <ligand>
        <name>ATP</name>
        <dbReference type="ChEBI" id="CHEBI:30616"/>
    </ligand>
</feature>
<comment type="function">
    <text evidence="1">ATPase subunit of a proteasome-like degradation complex; this subunit has chaperone activity. The binding of ATP and its subsequent hydrolysis by HslU are essential for unfolding of protein substrates subsequently hydrolyzed by HslV. HslU recognizes the N-terminal part of its protein substrates and unfolds these before they are guided to HslV for hydrolysis.</text>
</comment>
<comment type="subunit">
    <text evidence="1">A double ring-shaped homohexamer of HslV is capped on each side by a ring-shaped HslU homohexamer. The assembly of the HslU/HslV complex is dependent on binding of ATP.</text>
</comment>
<comment type="subcellular location">
    <subcellularLocation>
        <location evidence="1">Cytoplasm</location>
    </subcellularLocation>
</comment>
<comment type="similarity">
    <text evidence="1">Belongs to the ClpX chaperone family. HslU subfamily.</text>
</comment>
<sequence>MKSFDEMTPKEIVQELDKYIVGQYEAKKAVAIAVRNRIRRQKLPEEWRKEVLPKNILMIGPTGVGKTEIARRLAQLSGSPFLKVEATRFTEVGYVGKNVDSMIRDLVEISVNMVKQEKIKEVERQAEELVEERILDALVPESKAVPVVTNPFINLITGGQQQQYTPEDRRRFRAKREEMREKLRKGELENEEIEIELEETVSPFMGIFGPGMEDLGIEITNMFSGMLPKQKKKRKMKVSEARKVLLPLEAEKLIDMDKVVQEALDRAQNRGIIFIDEIDKIAGKESAVGPDVSRQGVQRDLLPIVEGTTIMTKYGPVRTDYILFIAAGAFHVSRPSDLIPELQGRFPIRVELSPLTEEDFVRILKEPENAIIKQYQALLSTEGVELVFTEDGIREMARIAYQLNQRLENIGARRLYTVAEKVLEEISFEAPDIPEKRIVVDAEYVRRRLERIVQDEDLSAYIL</sequence>
<protein>
    <recommendedName>
        <fullName evidence="1">ATP-dependent protease ATPase subunit HslU</fullName>
    </recommendedName>
    <alternativeName>
        <fullName evidence="1">Unfoldase HslU</fullName>
    </alternativeName>
</protein>
<accession>B1L8X3</accession>
<gene>
    <name evidence="1" type="primary">hslU</name>
    <name type="ordered locus">TRQ2_0415</name>
</gene>
<evidence type="ECO:0000255" key="1">
    <source>
        <dbReference type="HAMAP-Rule" id="MF_00249"/>
    </source>
</evidence>